<proteinExistence type="inferred from homology"/>
<feature type="chain" id="PRO_1000214087" description="Glucosamine-6-phosphate deaminase">
    <location>
        <begin position="1"/>
        <end position="266"/>
    </location>
</feature>
<feature type="active site" description="Proton acceptor; for enolization step" evidence="1">
    <location>
        <position position="72"/>
    </location>
</feature>
<feature type="active site" description="For ring-opening step" evidence="1">
    <location>
        <position position="141"/>
    </location>
</feature>
<feature type="active site" description="Proton acceptor; for ring-opening step" evidence="1">
    <location>
        <position position="143"/>
    </location>
</feature>
<feature type="active site" description="For ring-opening step" evidence="1">
    <location>
        <position position="148"/>
    </location>
</feature>
<feature type="site" description="Part of the allosteric site" evidence="1">
    <location>
        <position position="151"/>
    </location>
</feature>
<feature type="site" description="Part of the allosteric site" evidence="1">
    <location>
        <position position="158"/>
    </location>
</feature>
<feature type="site" description="Part of the allosteric site" evidence="1">
    <location>
        <position position="160"/>
    </location>
</feature>
<feature type="site" description="Part of the allosteric site" evidence="1">
    <location>
        <position position="161"/>
    </location>
</feature>
<feature type="site" description="Part of the allosteric site" evidence="1">
    <location>
        <position position="254"/>
    </location>
</feature>
<organism>
    <name type="scientific">Pectobacterium carotovorum subsp. carotovorum (strain PC1)</name>
    <dbReference type="NCBI Taxonomy" id="561230"/>
    <lineage>
        <taxon>Bacteria</taxon>
        <taxon>Pseudomonadati</taxon>
        <taxon>Pseudomonadota</taxon>
        <taxon>Gammaproteobacteria</taxon>
        <taxon>Enterobacterales</taxon>
        <taxon>Pectobacteriaceae</taxon>
        <taxon>Pectobacterium</taxon>
    </lineage>
</organism>
<keyword id="KW-0021">Allosteric enzyme</keyword>
<keyword id="KW-0119">Carbohydrate metabolism</keyword>
<keyword id="KW-0378">Hydrolase</keyword>
<protein>
    <recommendedName>
        <fullName evidence="1">Glucosamine-6-phosphate deaminase</fullName>
        <ecNumber evidence="1">3.5.99.6</ecNumber>
    </recommendedName>
    <alternativeName>
        <fullName evidence="1">GlcN6P deaminase</fullName>
        <shortName evidence="1">GNPDA</shortName>
    </alternativeName>
    <alternativeName>
        <fullName evidence="1">Glucosamine-6-phosphate isomerase</fullName>
    </alternativeName>
</protein>
<dbReference type="EC" id="3.5.99.6" evidence="1"/>
<dbReference type="EMBL" id="CP001657">
    <property type="protein sequence ID" value="ACT12251.1"/>
    <property type="molecule type" value="Genomic_DNA"/>
</dbReference>
<dbReference type="RefSeq" id="WP_015839483.1">
    <property type="nucleotide sequence ID" value="NC_012917.1"/>
</dbReference>
<dbReference type="SMR" id="C6DBY4"/>
<dbReference type="STRING" id="561230.PC1_1203"/>
<dbReference type="KEGG" id="pct:PC1_1203"/>
<dbReference type="eggNOG" id="COG0363">
    <property type="taxonomic scope" value="Bacteria"/>
</dbReference>
<dbReference type="HOGENOM" id="CLU_049611_0_1_6"/>
<dbReference type="OrthoDB" id="9791139at2"/>
<dbReference type="UniPathway" id="UPA00629">
    <property type="reaction ID" value="UER00684"/>
</dbReference>
<dbReference type="Proteomes" id="UP000002736">
    <property type="component" value="Chromosome"/>
</dbReference>
<dbReference type="GO" id="GO:0005737">
    <property type="term" value="C:cytoplasm"/>
    <property type="evidence" value="ECO:0007669"/>
    <property type="project" value="TreeGrafter"/>
</dbReference>
<dbReference type="GO" id="GO:0004342">
    <property type="term" value="F:glucosamine-6-phosphate deaminase activity"/>
    <property type="evidence" value="ECO:0007669"/>
    <property type="project" value="UniProtKB-UniRule"/>
</dbReference>
<dbReference type="GO" id="GO:0042802">
    <property type="term" value="F:identical protein binding"/>
    <property type="evidence" value="ECO:0007669"/>
    <property type="project" value="TreeGrafter"/>
</dbReference>
<dbReference type="GO" id="GO:0005975">
    <property type="term" value="P:carbohydrate metabolic process"/>
    <property type="evidence" value="ECO:0007669"/>
    <property type="project" value="InterPro"/>
</dbReference>
<dbReference type="GO" id="GO:0006043">
    <property type="term" value="P:glucosamine catabolic process"/>
    <property type="evidence" value="ECO:0007669"/>
    <property type="project" value="TreeGrafter"/>
</dbReference>
<dbReference type="GO" id="GO:0006046">
    <property type="term" value="P:N-acetylglucosamine catabolic process"/>
    <property type="evidence" value="ECO:0007669"/>
    <property type="project" value="TreeGrafter"/>
</dbReference>
<dbReference type="GO" id="GO:0019262">
    <property type="term" value="P:N-acetylneuraminate catabolic process"/>
    <property type="evidence" value="ECO:0007669"/>
    <property type="project" value="UniProtKB-UniRule"/>
</dbReference>
<dbReference type="CDD" id="cd01399">
    <property type="entry name" value="GlcN6P_deaminase"/>
    <property type="match status" value="1"/>
</dbReference>
<dbReference type="FunFam" id="3.40.50.1360:FF:000002">
    <property type="entry name" value="Glucosamine-6-phosphate deaminase"/>
    <property type="match status" value="1"/>
</dbReference>
<dbReference type="Gene3D" id="3.40.50.1360">
    <property type="match status" value="1"/>
</dbReference>
<dbReference type="HAMAP" id="MF_01241">
    <property type="entry name" value="GlcN6P_deamin"/>
    <property type="match status" value="1"/>
</dbReference>
<dbReference type="InterPro" id="IPR006148">
    <property type="entry name" value="Glc/Gal-6P_isomerase"/>
</dbReference>
<dbReference type="InterPro" id="IPR004547">
    <property type="entry name" value="Glucosamine6P_isomerase"/>
</dbReference>
<dbReference type="InterPro" id="IPR018321">
    <property type="entry name" value="Glucosamine6P_isomerase_CS"/>
</dbReference>
<dbReference type="InterPro" id="IPR037171">
    <property type="entry name" value="NagB/RpiA_transferase-like"/>
</dbReference>
<dbReference type="NCBIfam" id="TIGR00502">
    <property type="entry name" value="nagB"/>
    <property type="match status" value="1"/>
</dbReference>
<dbReference type="NCBIfam" id="NF001685">
    <property type="entry name" value="PRK00443.1-5"/>
    <property type="match status" value="1"/>
</dbReference>
<dbReference type="PANTHER" id="PTHR11280">
    <property type="entry name" value="GLUCOSAMINE-6-PHOSPHATE ISOMERASE"/>
    <property type="match status" value="1"/>
</dbReference>
<dbReference type="PANTHER" id="PTHR11280:SF5">
    <property type="entry name" value="GLUCOSAMINE-6-PHOSPHATE ISOMERASE"/>
    <property type="match status" value="1"/>
</dbReference>
<dbReference type="Pfam" id="PF01182">
    <property type="entry name" value="Glucosamine_iso"/>
    <property type="match status" value="1"/>
</dbReference>
<dbReference type="SUPFAM" id="SSF100950">
    <property type="entry name" value="NagB/RpiA/CoA transferase-like"/>
    <property type="match status" value="1"/>
</dbReference>
<dbReference type="PROSITE" id="PS01161">
    <property type="entry name" value="GLC_GALNAC_ISOMERASE"/>
    <property type="match status" value="1"/>
</dbReference>
<accession>C6DBY4</accession>
<evidence type="ECO:0000255" key="1">
    <source>
        <dbReference type="HAMAP-Rule" id="MF_01241"/>
    </source>
</evidence>
<reference key="1">
    <citation type="submission" date="2009-07" db="EMBL/GenBank/DDBJ databases">
        <title>Complete sequence of Pectobacterium carotovorum subsp. carotovorum PC1.</title>
        <authorList>
            <consortium name="US DOE Joint Genome Institute"/>
            <person name="Lucas S."/>
            <person name="Copeland A."/>
            <person name="Lapidus A."/>
            <person name="Glavina del Rio T."/>
            <person name="Tice H."/>
            <person name="Bruce D."/>
            <person name="Goodwin L."/>
            <person name="Pitluck S."/>
            <person name="Munk A.C."/>
            <person name="Brettin T."/>
            <person name="Detter J.C."/>
            <person name="Han C."/>
            <person name="Tapia R."/>
            <person name="Larimer F."/>
            <person name="Land M."/>
            <person name="Hauser L."/>
            <person name="Kyrpides N."/>
            <person name="Mikhailova N."/>
            <person name="Balakrishnan V."/>
            <person name="Glasner J."/>
            <person name="Perna N.T."/>
        </authorList>
    </citation>
    <scope>NUCLEOTIDE SEQUENCE [LARGE SCALE GENOMIC DNA]</scope>
    <source>
        <strain>PC1</strain>
    </source>
</reference>
<gene>
    <name evidence="1" type="primary">nagB</name>
    <name type="ordered locus">PC1_1203</name>
</gene>
<name>NAGB_PECCP</name>
<comment type="function">
    <text evidence="1">Catalyzes the reversible isomerization-deamination of glucosamine 6-phosphate (GlcN6P) to form fructose 6-phosphate (Fru6P) and ammonium ion.</text>
</comment>
<comment type="catalytic activity">
    <reaction evidence="1">
        <text>alpha-D-glucosamine 6-phosphate + H2O = beta-D-fructose 6-phosphate + NH4(+)</text>
        <dbReference type="Rhea" id="RHEA:12172"/>
        <dbReference type="ChEBI" id="CHEBI:15377"/>
        <dbReference type="ChEBI" id="CHEBI:28938"/>
        <dbReference type="ChEBI" id="CHEBI:57634"/>
        <dbReference type="ChEBI" id="CHEBI:75989"/>
        <dbReference type="EC" id="3.5.99.6"/>
    </reaction>
</comment>
<comment type="activity regulation">
    <text evidence="1">Allosterically activated by N-acetylglucosamine 6-phosphate (GlcNAc6P).</text>
</comment>
<comment type="pathway">
    <text evidence="1">Amino-sugar metabolism; N-acetylneuraminate degradation; D-fructose 6-phosphate from N-acetylneuraminate: step 5/5.</text>
</comment>
<comment type="subunit">
    <text evidence="1">Homohexamer.</text>
</comment>
<comment type="similarity">
    <text evidence="1">Belongs to the glucosamine/galactosamine-6-phosphate isomerase family. NagB subfamily.</text>
</comment>
<sequence>MRLIPLTTAADVGKWAARHIVEKINAFKPSAERPFILGLPTGSSPLEAYKSLVAMHQAGLVSFKHVVTFNMDEYVGLPTDHPESYHTFMHQNFFNHIDIPRENINLLNGNAEDTTAECRRYEEKIKSYGKIHLFMGGVGNDGHIAFNEPASSLASRTRIKTLTEETRIANSRFFGGDVSLVPKFALTVGVGTLLDAEEVMILVTGRNKALALQAAVEGNVNHMWTISCLQLHAKAIMVCDEPSTMELKVKTVKYFRELETESMKNL</sequence>